<organismHost>
    <name type="scientific">Homo sapiens</name>
    <name type="common">Human</name>
    <dbReference type="NCBI Taxonomy" id="9606"/>
</organismHost>
<protein>
    <recommendedName>
        <fullName evidence="1">Intermediate capsid protein VP6</fullName>
    </recommendedName>
</protein>
<dbReference type="EMBL" id="EF583048">
    <property type="protein sequence ID" value="ABU87857.1"/>
    <property type="molecule type" value="Genomic_RNA"/>
</dbReference>
<dbReference type="EMBL" id="EU679383">
    <property type="protein sequence ID" value="ACD50876.1"/>
    <property type="molecule type" value="Genomic_RNA"/>
</dbReference>
<dbReference type="EMBL" id="EU679385">
    <property type="protein sequence ID" value="ACD50878.1"/>
    <property type="molecule type" value="Genomic_RNA"/>
</dbReference>
<dbReference type="SMR" id="B1NKU0"/>
<dbReference type="Proteomes" id="UP000007048">
    <property type="component" value="Genome"/>
</dbReference>
<dbReference type="GO" id="GO:0019031">
    <property type="term" value="C:viral envelope"/>
    <property type="evidence" value="ECO:0007669"/>
    <property type="project" value="UniProtKB-UniRule"/>
</dbReference>
<dbReference type="GO" id="GO:0039626">
    <property type="term" value="C:viral intermediate capsid"/>
    <property type="evidence" value="ECO:0007669"/>
    <property type="project" value="UniProtKB-UniRule"/>
</dbReference>
<dbReference type="GO" id="GO:0046789">
    <property type="term" value="F:host cell surface receptor binding"/>
    <property type="evidence" value="ECO:0007669"/>
    <property type="project" value="UniProtKB-UniRule"/>
</dbReference>
<dbReference type="GO" id="GO:0046872">
    <property type="term" value="F:metal ion binding"/>
    <property type="evidence" value="ECO:0007669"/>
    <property type="project" value="UniProtKB-UniRule"/>
</dbReference>
<dbReference type="GO" id="GO:0005198">
    <property type="term" value="F:structural molecule activity"/>
    <property type="evidence" value="ECO:0007669"/>
    <property type="project" value="UniProtKB-UniRule"/>
</dbReference>
<dbReference type="GO" id="GO:0019064">
    <property type="term" value="P:fusion of virus membrane with host plasma membrane"/>
    <property type="evidence" value="ECO:0007669"/>
    <property type="project" value="UniProtKB-UniRule"/>
</dbReference>
<dbReference type="FunFam" id="2.60.120.170:FF:000001">
    <property type="entry name" value="Intermediate capsid protein VP6"/>
    <property type="match status" value="1"/>
</dbReference>
<dbReference type="Gene3D" id="2.60.120.170">
    <property type="match status" value="1"/>
</dbReference>
<dbReference type="Gene3D" id="1.10.1350.10">
    <property type="entry name" value="Viral capsid alpha domain"/>
    <property type="match status" value="1"/>
</dbReference>
<dbReference type="HAMAP" id="MF_04126">
    <property type="entry name" value="Rota_VP6"/>
    <property type="match status" value="1"/>
</dbReference>
<dbReference type="HAMAP" id="MF_04129">
    <property type="entry name" value="Rota_VP6_A"/>
    <property type="match status" value="1"/>
</dbReference>
<dbReference type="InterPro" id="IPR008980">
    <property type="entry name" value="Capsid_hemagglutn"/>
</dbReference>
<dbReference type="InterPro" id="IPR001385">
    <property type="entry name" value="Rotavirus_A/C_VP6"/>
</dbReference>
<dbReference type="InterPro" id="IPR008935">
    <property type="entry name" value="Virus_capsid_a-hlx_vir"/>
</dbReference>
<dbReference type="Pfam" id="PF00980">
    <property type="entry name" value="Rota_Capsid_VP6"/>
    <property type="match status" value="1"/>
</dbReference>
<dbReference type="SUPFAM" id="SSF48345">
    <property type="entry name" value="A virus capsid protein alpha-helical domain"/>
    <property type="match status" value="1"/>
</dbReference>
<dbReference type="SUPFAM" id="SSF49818">
    <property type="entry name" value="Viral protein domain"/>
    <property type="match status" value="1"/>
</dbReference>
<keyword id="KW-0106">Calcium</keyword>
<keyword id="KW-0167">Capsid protein</keyword>
<keyword id="KW-1154">Intermediate capsid protein</keyword>
<keyword id="KW-0479">Metal-binding</keyword>
<keyword id="KW-0832">Ubl conjugation</keyword>
<keyword id="KW-0946">Virion</keyword>
<keyword id="KW-0862">Zinc</keyword>
<evidence type="ECO:0000255" key="1">
    <source>
        <dbReference type="HAMAP-Rule" id="MF_04129"/>
    </source>
</evidence>
<feature type="chain" id="PRO_0000368179" description="Intermediate capsid protein VP6">
    <location>
        <begin position="1"/>
        <end position="397"/>
    </location>
</feature>
<feature type="region of interest" description="Interaction with the inner capsid protein VP2" evidence="1">
    <location>
        <begin position="62"/>
        <end position="73"/>
    </location>
</feature>
<feature type="binding site" evidence="1">
    <location>
        <position position="153"/>
    </location>
    <ligand>
        <name>Zn(2+)</name>
        <dbReference type="ChEBI" id="CHEBI:29105"/>
        <note>ligand shared between all trimeric partners</note>
    </ligand>
</feature>
<feature type="binding site" evidence="1">
    <location>
        <position position="266"/>
    </location>
    <ligand>
        <name>Ca(2+)</name>
        <dbReference type="ChEBI" id="CHEBI:29108"/>
    </ligand>
</feature>
<feature type="binding site" evidence="1">
    <location>
        <position position="286"/>
    </location>
    <ligand>
        <name>Ca(2+)</name>
        <dbReference type="ChEBI" id="CHEBI:29108"/>
    </ligand>
</feature>
<accession>B1NKU0</accession>
<organism>
    <name type="scientific">Rotavirus A (strain RVA/Human/United Kingdom/ST3/1975/G4P2A[6])</name>
    <name type="common">RV-A</name>
    <name type="synonym">Rotavirus A (strain St. Thomas 3)</name>
    <dbReference type="NCBI Taxonomy" id="10960"/>
    <lineage>
        <taxon>Viruses</taxon>
        <taxon>Riboviria</taxon>
        <taxon>Orthornavirae</taxon>
        <taxon>Duplornaviricota</taxon>
        <taxon>Resentoviricetes</taxon>
        <taxon>Reovirales</taxon>
        <taxon>Sedoreoviridae</taxon>
        <taxon>Rotavirus</taxon>
        <taxon>Rotavirus A</taxon>
    </lineage>
</organism>
<name>VP6_ROTHT</name>
<comment type="function">
    <text evidence="1">Intermediate capsid protein that self assembles to form an icosahedral capsid with a T=13 symmetry, which consists of 230 trimers of VP6, with channels at each of its five-fold vertices. This capsid constitutes the middle concentric layer of the viral mature particle. The innermost VP2 capsid and the intermediate VP6 capsid remain intact following cell entry to protect the dsRNA from degradation and to prevent unfavorable antiviral responses in the host cell during all the replication cycle of the virus. Nascent transcripts are transcribed within the structural confines of this double-layered particle (DLP) and are extruded through the channels at the five-fold axes. VP6 is required for the transcription activity of the DLP.</text>
</comment>
<comment type="subunit">
    <text evidence="1">Homotrimer. Interacts with the inner capsid protein VP2. Interacts with the outer capsid glycoprotein VP7. Interacts with the outer capsid protein VP5*.</text>
</comment>
<comment type="subcellular location">
    <subcellularLocation>
        <location evidence="1">Virion</location>
    </subcellularLocation>
    <text evidence="1">Component of the intermediate capsid. Also found in spherical cytoplasmic structures, called virus factories, that appear early after infection and are the site of viral replication and packaging.</text>
</comment>
<comment type="PTM">
    <text evidence="1">The N-terminus is blocked.</text>
</comment>
<comment type="PTM">
    <text evidence="1">Sumoylated with SUMO1 and SUMO2. Sumoylation of viral proteins seems to have a positive role on viral replication.</text>
</comment>
<comment type="miscellaneous">
    <text evidence="1">The VP6 trimer contains a zinc ion located at the center of the molecule. The zinc ion is not essential for either trimerization or transcription activity of the DLP. Zinc-depleted VP6 has an increased sensitivity to proteases.</text>
</comment>
<comment type="similarity">
    <text evidence="1">Belongs to the rotavirus VP6 family.</text>
</comment>
<proteinExistence type="inferred from homology"/>
<reference key="1">
    <citation type="journal article" date="2008" name="J. Virol.">
        <title>Full genome-based classification of rotaviruses reveals a common origin between human Wa-Like and porcine rotavirus strains and human DS-1-like and bovine rotavirus strains.</title>
        <authorList>
            <person name="Matthijnssens J."/>
            <person name="Ciarlet M."/>
            <person name="Heiman E.M."/>
            <person name="Arijs I."/>
            <person name="Delbeke T."/>
            <person name="McDonald S.M."/>
            <person name="Palombo E.A."/>
            <person name="Iturriza-Gomara M."/>
            <person name="Maes P."/>
            <person name="Patton J.T."/>
            <person name="Rahman M."/>
            <person name="Van Ranst M."/>
        </authorList>
    </citation>
    <scope>NUCLEOTIDE SEQUENCE [GENOMIC RNA]</scope>
</reference>
<reference key="2">
    <citation type="submission" date="2008-04" db="EMBL/GenBank/DDBJ databases">
        <title>Molecular characterization of human rotavirus strains G1 with P[8] isolated in South Korea.</title>
        <authorList>
            <person name="Le V.P."/>
            <person name="Kim W.Y."/>
        </authorList>
    </citation>
    <scope>NUCLEOTIDE SEQUENCE [GENOMIC RNA]</scope>
    <source>
        <strain>CAU 136</strain>
        <strain>CAU 163</strain>
    </source>
</reference>
<sequence>MEVLYSLSKTLKDARDKIVEGTLYSNVSDLIQQFNQMIVTMNGNDFQTGGIGNLPIRNWTFDFGLLGTTLLNLDANYVETARTTIEYFIDFIDNVCMDEMARESQRNGVAPQSEALRKLAGIKFKRINFNNSSEYIENWNLQNRRQRTGFVFHKPNIFPYSASFTLNRSQPMHDNLMGTMWLNAGSEIQVAGFDYSCALNAPANIQQFEHIVQLRRALTTATITLLPDAERFSFPRVINSADGATTWFFNPIILRPNNVEVEFLLNGQIINTYQARFGTIIARNFDTIRLSFQLMRPPNMTPAVNALFPQAQPFQHHATVGLTLRIESAVCESVLADANETLLANVTAVRQEYAIPVGPVFPPGMNWTELITNYSPSREDNLQRVFTVASIRSMLIK</sequence>